<gene>
    <name evidence="1" type="primary">ureA</name>
    <name type="ordered locus">alr3667</name>
</gene>
<organism>
    <name type="scientific">Nostoc sp. (strain PCC 7120 / SAG 25.82 / UTEX 2576)</name>
    <dbReference type="NCBI Taxonomy" id="103690"/>
    <lineage>
        <taxon>Bacteria</taxon>
        <taxon>Bacillati</taxon>
        <taxon>Cyanobacteriota</taxon>
        <taxon>Cyanophyceae</taxon>
        <taxon>Nostocales</taxon>
        <taxon>Nostocaceae</taxon>
        <taxon>Nostoc</taxon>
    </lineage>
</organism>
<sequence>MQLTPQEKDKLLIFTAALVAERRKNRGLKLNYPEAVAYISAAILEGARDGNTVSELMSYGTTLLTRDDVMEGIAEMVHEVQVEATFPDGTKLVTVHNPIR</sequence>
<comment type="catalytic activity">
    <reaction evidence="1">
        <text>urea + 2 H2O + H(+) = hydrogencarbonate + 2 NH4(+)</text>
        <dbReference type="Rhea" id="RHEA:20557"/>
        <dbReference type="ChEBI" id="CHEBI:15377"/>
        <dbReference type="ChEBI" id="CHEBI:15378"/>
        <dbReference type="ChEBI" id="CHEBI:16199"/>
        <dbReference type="ChEBI" id="CHEBI:17544"/>
        <dbReference type="ChEBI" id="CHEBI:28938"/>
        <dbReference type="EC" id="3.5.1.5"/>
    </reaction>
</comment>
<comment type="pathway">
    <text evidence="1">Nitrogen metabolism; urea degradation; CO(2) and NH(3) from urea (urease route): step 1/1.</text>
</comment>
<comment type="subunit">
    <text evidence="1">Heterotrimer of UreA (gamma), UreB (beta) and UreC (alpha) subunits. Three heterotrimers associate to form the active enzyme.</text>
</comment>
<comment type="subcellular location">
    <subcellularLocation>
        <location evidence="1">Cytoplasm</location>
    </subcellularLocation>
</comment>
<comment type="similarity">
    <text evidence="1">Belongs to the urease gamma subunit family.</text>
</comment>
<proteinExistence type="inferred from homology"/>
<dbReference type="EC" id="3.5.1.5" evidence="1"/>
<dbReference type="EMBL" id="BA000019">
    <property type="protein sequence ID" value="BAB75366.1"/>
    <property type="molecule type" value="Genomic_DNA"/>
</dbReference>
<dbReference type="PIR" id="AD2264">
    <property type="entry name" value="AD2264"/>
</dbReference>
<dbReference type="RefSeq" id="WP_010997811.1">
    <property type="nucleotide sequence ID" value="NZ_RSCN01000044.1"/>
</dbReference>
<dbReference type="SMR" id="Q8YQZ3"/>
<dbReference type="STRING" id="103690.gene:10495709"/>
<dbReference type="KEGG" id="ana:alr3667"/>
<dbReference type="eggNOG" id="COG0831">
    <property type="taxonomic scope" value="Bacteria"/>
</dbReference>
<dbReference type="OrthoDB" id="9793527at2"/>
<dbReference type="UniPathway" id="UPA00258">
    <property type="reaction ID" value="UER00370"/>
</dbReference>
<dbReference type="Proteomes" id="UP000002483">
    <property type="component" value="Chromosome"/>
</dbReference>
<dbReference type="GO" id="GO:0005737">
    <property type="term" value="C:cytoplasm"/>
    <property type="evidence" value="ECO:0007669"/>
    <property type="project" value="UniProtKB-SubCell"/>
</dbReference>
<dbReference type="GO" id="GO:0016151">
    <property type="term" value="F:nickel cation binding"/>
    <property type="evidence" value="ECO:0007669"/>
    <property type="project" value="InterPro"/>
</dbReference>
<dbReference type="GO" id="GO:0009039">
    <property type="term" value="F:urease activity"/>
    <property type="evidence" value="ECO:0007669"/>
    <property type="project" value="UniProtKB-UniRule"/>
</dbReference>
<dbReference type="GO" id="GO:0043419">
    <property type="term" value="P:urea catabolic process"/>
    <property type="evidence" value="ECO:0007669"/>
    <property type="project" value="UniProtKB-UniRule"/>
</dbReference>
<dbReference type="CDD" id="cd00390">
    <property type="entry name" value="Urease_gamma"/>
    <property type="match status" value="1"/>
</dbReference>
<dbReference type="Gene3D" id="3.30.280.10">
    <property type="entry name" value="Urease, gamma-like subunit"/>
    <property type="match status" value="1"/>
</dbReference>
<dbReference type="HAMAP" id="MF_00739">
    <property type="entry name" value="Urease_gamma"/>
    <property type="match status" value="1"/>
</dbReference>
<dbReference type="InterPro" id="IPR012010">
    <property type="entry name" value="Urease_gamma"/>
</dbReference>
<dbReference type="InterPro" id="IPR002026">
    <property type="entry name" value="Urease_gamma/gamma-beta_su"/>
</dbReference>
<dbReference type="InterPro" id="IPR036463">
    <property type="entry name" value="Urease_gamma_sf"/>
</dbReference>
<dbReference type="InterPro" id="IPR050069">
    <property type="entry name" value="Urease_subunit"/>
</dbReference>
<dbReference type="NCBIfam" id="NF009712">
    <property type="entry name" value="PRK13241.1"/>
    <property type="match status" value="1"/>
</dbReference>
<dbReference type="NCBIfam" id="TIGR00193">
    <property type="entry name" value="urease_gam"/>
    <property type="match status" value="1"/>
</dbReference>
<dbReference type="PANTHER" id="PTHR33569">
    <property type="entry name" value="UREASE"/>
    <property type="match status" value="1"/>
</dbReference>
<dbReference type="PANTHER" id="PTHR33569:SF1">
    <property type="entry name" value="UREASE"/>
    <property type="match status" value="1"/>
</dbReference>
<dbReference type="Pfam" id="PF00547">
    <property type="entry name" value="Urease_gamma"/>
    <property type="match status" value="1"/>
</dbReference>
<dbReference type="PIRSF" id="PIRSF001223">
    <property type="entry name" value="Urease_gamma"/>
    <property type="match status" value="1"/>
</dbReference>
<dbReference type="SUPFAM" id="SSF54111">
    <property type="entry name" value="Urease, gamma-subunit"/>
    <property type="match status" value="1"/>
</dbReference>
<keyword id="KW-0963">Cytoplasm</keyword>
<keyword id="KW-0378">Hydrolase</keyword>
<keyword id="KW-1185">Reference proteome</keyword>
<feature type="chain" id="PRO_0000097988" description="Urease subunit gamma">
    <location>
        <begin position="1"/>
        <end position="100"/>
    </location>
</feature>
<protein>
    <recommendedName>
        <fullName evidence="1">Urease subunit gamma</fullName>
        <ecNumber evidence="1">3.5.1.5</ecNumber>
    </recommendedName>
    <alternativeName>
        <fullName evidence="1">Urea amidohydrolase subunit gamma</fullName>
    </alternativeName>
</protein>
<accession>Q8YQZ3</accession>
<evidence type="ECO:0000255" key="1">
    <source>
        <dbReference type="HAMAP-Rule" id="MF_00739"/>
    </source>
</evidence>
<name>URE3_NOSS1</name>
<reference key="1">
    <citation type="journal article" date="2001" name="DNA Res.">
        <title>Complete genomic sequence of the filamentous nitrogen-fixing cyanobacterium Anabaena sp. strain PCC 7120.</title>
        <authorList>
            <person name="Kaneko T."/>
            <person name="Nakamura Y."/>
            <person name="Wolk C.P."/>
            <person name="Kuritz T."/>
            <person name="Sasamoto S."/>
            <person name="Watanabe A."/>
            <person name="Iriguchi M."/>
            <person name="Ishikawa A."/>
            <person name="Kawashima K."/>
            <person name="Kimura T."/>
            <person name="Kishida Y."/>
            <person name="Kohara M."/>
            <person name="Matsumoto M."/>
            <person name="Matsuno A."/>
            <person name="Muraki A."/>
            <person name="Nakazaki N."/>
            <person name="Shimpo S."/>
            <person name="Sugimoto M."/>
            <person name="Takazawa M."/>
            <person name="Yamada M."/>
            <person name="Yasuda M."/>
            <person name="Tabata S."/>
        </authorList>
    </citation>
    <scope>NUCLEOTIDE SEQUENCE [LARGE SCALE GENOMIC DNA]</scope>
    <source>
        <strain>PCC 7120 / SAG 25.82 / UTEX 2576</strain>
    </source>
</reference>